<proteinExistence type="inferred from homology"/>
<accession>A4FXX6</accession>
<comment type="function">
    <text evidence="1">Catalyzes the transfer of the AMP portion of ATP to flavin mononucleotide (FMN) to produce flavin adenine dinucleotide (FAD) coenzyme.</text>
</comment>
<comment type="catalytic activity">
    <reaction evidence="1">
        <text>FMN + ATP + H(+) = FAD + diphosphate</text>
        <dbReference type="Rhea" id="RHEA:17237"/>
        <dbReference type="ChEBI" id="CHEBI:15378"/>
        <dbReference type="ChEBI" id="CHEBI:30616"/>
        <dbReference type="ChEBI" id="CHEBI:33019"/>
        <dbReference type="ChEBI" id="CHEBI:57692"/>
        <dbReference type="ChEBI" id="CHEBI:58210"/>
        <dbReference type="EC" id="2.7.7.2"/>
    </reaction>
</comment>
<comment type="cofactor">
    <cofactor evidence="1">
        <name>a divalent metal cation</name>
        <dbReference type="ChEBI" id="CHEBI:60240"/>
    </cofactor>
</comment>
<comment type="pathway">
    <text evidence="1">Cofactor biosynthesis; FAD biosynthesis; FAD from FMN: step 1/1.</text>
</comment>
<comment type="subunit">
    <text evidence="1">Homodimer.</text>
</comment>
<comment type="similarity">
    <text evidence="1">Belongs to the archaeal FAD synthase family.</text>
</comment>
<gene>
    <name evidence="1" type="primary">ribL</name>
    <name type="ordered locus">MmarC5_0750</name>
</gene>
<sequence length="150" mass="17259">MEKKIAVTAGTFDLLHPGHFNTLNFAKKHADELVVIIARDETVKKIKGRSPVIPEEQRKVMIEALKPVDRAVLGSLTNKLEPILEIRPDVIILGPDQTTYQINELKSQLAKHFLYPEILKVEEYVKCPFHSSYDILKEIVRRWCCKELKV</sequence>
<dbReference type="EC" id="2.7.7.2" evidence="1"/>
<dbReference type="EMBL" id="CP000609">
    <property type="protein sequence ID" value="ABO35060.1"/>
    <property type="molecule type" value="Genomic_DNA"/>
</dbReference>
<dbReference type="RefSeq" id="WP_011868514.1">
    <property type="nucleotide sequence ID" value="NC_009135.1"/>
</dbReference>
<dbReference type="SMR" id="A4FXX6"/>
<dbReference type="STRING" id="402880.MmarC5_0750"/>
<dbReference type="GeneID" id="4928818"/>
<dbReference type="KEGG" id="mmq:MmarC5_0750"/>
<dbReference type="eggNOG" id="arCOG01222">
    <property type="taxonomic scope" value="Archaea"/>
</dbReference>
<dbReference type="HOGENOM" id="CLU_034585_2_1_2"/>
<dbReference type="OrthoDB" id="1912at2157"/>
<dbReference type="UniPathway" id="UPA00277">
    <property type="reaction ID" value="UER00407"/>
</dbReference>
<dbReference type="Proteomes" id="UP000000253">
    <property type="component" value="Chromosome"/>
</dbReference>
<dbReference type="GO" id="GO:0005524">
    <property type="term" value="F:ATP binding"/>
    <property type="evidence" value="ECO:0007669"/>
    <property type="project" value="UniProtKB-UniRule"/>
</dbReference>
<dbReference type="GO" id="GO:0003919">
    <property type="term" value="F:FMN adenylyltransferase activity"/>
    <property type="evidence" value="ECO:0007669"/>
    <property type="project" value="UniProtKB-UniRule"/>
</dbReference>
<dbReference type="GO" id="GO:0006747">
    <property type="term" value="P:FAD biosynthetic process"/>
    <property type="evidence" value="ECO:0007669"/>
    <property type="project" value="UniProtKB-UniRule"/>
</dbReference>
<dbReference type="GO" id="GO:0046444">
    <property type="term" value="P:FMN metabolic process"/>
    <property type="evidence" value="ECO:0007669"/>
    <property type="project" value="UniProtKB-UniRule"/>
</dbReference>
<dbReference type="Gene3D" id="3.40.50.620">
    <property type="entry name" value="HUPs"/>
    <property type="match status" value="1"/>
</dbReference>
<dbReference type="HAMAP" id="MF_02115">
    <property type="entry name" value="FAD_synth_arch"/>
    <property type="match status" value="1"/>
</dbReference>
<dbReference type="InterPro" id="IPR050385">
    <property type="entry name" value="Archaeal_FAD_synthase"/>
</dbReference>
<dbReference type="InterPro" id="IPR004821">
    <property type="entry name" value="Cyt_trans-like"/>
</dbReference>
<dbReference type="InterPro" id="IPR024902">
    <property type="entry name" value="FAD_synth_RibL"/>
</dbReference>
<dbReference type="InterPro" id="IPR014729">
    <property type="entry name" value="Rossmann-like_a/b/a_fold"/>
</dbReference>
<dbReference type="NCBIfam" id="TIGR00125">
    <property type="entry name" value="cyt_tran_rel"/>
    <property type="match status" value="1"/>
</dbReference>
<dbReference type="PANTHER" id="PTHR43793">
    <property type="entry name" value="FAD SYNTHASE"/>
    <property type="match status" value="1"/>
</dbReference>
<dbReference type="PANTHER" id="PTHR43793:SF1">
    <property type="entry name" value="FAD SYNTHASE"/>
    <property type="match status" value="1"/>
</dbReference>
<dbReference type="Pfam" id="PF01467">
    <property type="entry name" value="CTP_transf_like"/>
    <property type="match status" value="1"/>
</dbReference>
<dbReference type="SUPFAM" id="SSF52374">
    <property type="entry name" value="Nucleotidylyl transferase"/>
    <property type="match status" value="1"/>
</dbReference>
<organism>
    <name type="scientific">Methanococcus maripaludis (strain C5 / ATCC BAA-1333)</name>
    <dbReference type="NCBI Taxonomy" id="402880"/>
    <lineage>
        <taxon>Archaea</taxon>
        <taxon>Methanobacteriati</taxon>
        <taxon>Methanobacteriota</taxon>
        <taxon>Methanomada group</taxon>
        <taxon>Methanococci</taxon>
        <taxon>Methanococcales</taxon>
        <taxon>Methanococcaceae</taxon>
        <taxon>Methanococcus</taxon>
    </lineage>
</organism>
<keyword id="KW-0067">ATP-binding</keyword>
<keyword id="KW-0274">FAD</keyword>
<keyword id="KW-0285">Flavoprotein</keyword>
<keyword id="KW-0288">FMN</keyword>
<keyword id="KW-0547">Nucleotide-binding</keyword>
<keyword id="KW-0548">Nucleotidyltransferase</keyword>
<keyword id="KW-0808">Transferase</keyword>
<evidence type="ECO:0000255" key="1">
    <source>
        <dbReference type="HAMAP-Rule" id="MF_02115"/>
    </source>
</evidence>
<reference key="1">
    <citation type="submission" date="2007-03" db="EMBL/GenBank/DDBJ databases">
        <title>Complete sequence of chromosome of Methanococcus maripaludis C5.</title>
        <authorList>
            <consortium name="US DOE Joint Genome Institute"/>
            <person name="Copeland A."/>
            <person name="Lucas S."/>
            <person name="Lapidus A."/>
            <person name="Barry K."/>
            <person name="Glavina del Rio T."/>
            <person name="Dalin E."/>
            <person name="Tice H."/>
            <person name="Pitluck S."/>
            <person name="Chertkov O."/>
            <person name="Brettin T."/>
            <person name="Bruce D."/>
            <person name="Han C."/>
            <person name="Detter J.C."/>
            <person name="Schmutz J."/>
            <person name="Larimer F."/>
            <person name="Land M."/>
            <person name="Hauser L."/>
            <person name="Kyrpides N."/>
            <person name="Mikhailova N."/>
            <person name="Sieprawska-Lupa M."/>
            <person name="Whitman W.B."/>
            <person name="Richardson P."/>
        </authorList>
    </citation>
    <scope>NUCLEOTIDE SEQUENCE [LARGE SCALE GENOMIC DNA]</scope>
    <source>
        <strain>C5 / ATCC BAA-1333</strain>
    </source>
</reference>
<name>RIBL_METM5</name>
<protein>
    <recommendedName>
        <fullName evidence="1">FAD synthase</fullName>
        <ecNumber evidence="1">2.7.7.2</ecNumber>
    </recommendedName>
    <alternativeName>
        <fullName evidence="1">FMN adenylyltransferase</fullName>
    </alternativeName>
    <alternativeName>
        <fullName evidence="1">Flavin adenine dinucleotide synthase</fullName>
    </alternativeName>
</protein>
<feature type="chain" id="PRO_0000406255" description="FAD synthase">
    <location>
        <begin position="1"/>
        <end position="150"/>
    </location>
</feature>
<feature type="binding site" evidence="1">
    <location>
        <begin position="11"/>
        <end position="12"/>
    </location>
    <ligand>
        <name>ATP</name>
        <dbReference type="ChEBI" id="CHEBI:30616"/>
    </ligand>
</feature>
<feature type="binding site" evidence="1">
    <location>
        <begin position="16"/>
        <end position="19"/>
    </location>
    <ligand>
        <name>ATP</name>
        <dbReference type="ChEBI" id="CHEBI:30616"/>
    </ligand>
</feature>
<feature type="binding site" evidence="1">
    <location>
        <position position="96"/>
    </location>
    <ligand>
        <name>ATP</name>
        <dbReference type="ChEBI" id="CHEBI:30616"/>
    </ligand>
</feature>
<feature type="binding site" evidence="1">
    <location>
        <position position="124"/>
    </location>
    <ligand>
        <name>ATP</name>
        <dbReference type="ChEBI" id="CHEBI:30616"/>
    </ligand>
</feature>